<evidence type="ECO:0000255" key="1">
    <source>
        <dbReference type="HAMAP-Rule" id="MF_01445"/>
    </source>
</evidence>
<reference key="1">
    <citation type="journal article" date="2011" name="J. Bacteriol.">
        <title>Comparative genomics of 28 Salmonella enterica isolates: evidence for CRISPR-mediated adaptive sublineage evolution.</title>
        <authorList>
            <person name="Fricke W.F."/>
            <person name="Mammel M.K."/>
            <person name="McDermott P.F."/>
            <person name="Tartera C."/>
            <person name="White D.G."/>
            <person name="Leclerc J.E."/>
            <person name="Ravel J."/>
            <person name="Cebula T.A."/>
        </authorList>
    </citation>
    <scope>NUCLEOTIDE SEQUENCE [LARGE SCALE GENOMIC DNA]</scope>
    <source>
        <strain>CVM19633</strain>
    </source>
</reference>
<keyword id="KW-0012">Acyltransferase</keyword>
<keyword id="KW-0963">Cytoplasm</keyword>
<keyword id="KW-0408">Iron</keyword>
<keyword id="KW-0479">Metal-binding</keyword>
<keyword id="KW-0808">Transferase</keyword>
<keyword id="KW-0819">tRNA processing</keyword>
<gene>
    <name evidence="1" type="primary">tsaD</name>
    <name type="synonym">gcp</name>
    <name type="ordered locus">SeSA_A3398</name>
</gene>
<organism>
    <name type="scientific">Salmonella schwarzengrund (strain CVM19633)</name>
    <dbReference type="NCBI Taxonomy" id="439843"/>
    <lineage>
        <taxon>Bacteria</taxon>
        <taxon>Pseudomonadati</taxon>
        <taxon>Pseudomonadota</taxon>
        <taxon>Gammaproteobacteria</taxon>
        <taxon>Enterobacterales</taxon>
        <taxon>Enterobacteriaceae</taxon>
        <taxon>Salmonella</taxon>
    </lineage>
</organism>
<proteinExistence type="inferred from homology"/>
<accession>B4TVU2</accession>
<feature type="chain" id="PRO_1000146021" description="tRNA N6-adenosine threonylcarbamoyltransferase">
    <location>
        <begin position="1"/>
        <end position="337"/>
    </location>
</feature>
<feature type="binding site" evidence="1">
    <location>
        <position position="111"/>
    </location>
    <ligand>
        <name>Fe cation</name>
        <dbReference type="ChEBI" id="CHEBI:24875"/>
    </ligand>
</feature>
<feature type="binding site" evidence="1">
    <location>
        <position position="115"/>
    </location>
    <ligand>
        <name>Fe cation</name>
        <dbReference type="ChEBI" id="CHEBI:24875"/>
    </ligand>
</feature>
<feature type="binding site" evidence="1">
    <location>
        <begin position="134"/>
        <end position="138"/>
    </location>
    <ligand>
        <name>substrate</name>
    </ligand>
</feature>
<feature type="binding site" evidence="1">
    <location>
        <position position="167"/>
    </location>
    <ligand>
        <name>substrate</name>
    </ligand>
</feature>
<feature type="binding site" evidence="1">
    <location>
        <position position="180"/>
    </location>
    <ligand>
        <name>substrate</name>
    </ligand>
</feature>
<feature type="binding site" evidence="1">
    <location>
        <position position="272"/>
    </location>
    <ligand>
        <name>substrate</name>
    </ligand>
</feature>
<feature type="binding site" evidence="1">
    <location>
        <position position="300"/>
    </location>
    <ligand>
        <name>Fe cation</name>
        <dbReference type="ChEBI" id="CHEBI:24875"/>
    </ligand>
</feature>
<comment type="function">
    <text evidence="1">Required for the formation of a threonylcarbamoyl group on adenosine at position 37 (t(6)A37) in tRNAs that read codons beginning with adenine. Is involved in the transfer of the threonylcarbamoyl moiety of threonylcarbamoyl-AMP (TC-AMP) to the N6 group of A37, together with TsaE and TsaB. TsaD likely plays a direct catalytic role in this reaction.</text>
</comment>
<comment type="catalytic activity">
    <reaction evidence="1">
        <text>L-threonylcarbamoyladenylate + adenosine(37) in tRNA = N(6)-L-threonylcarbamoyladenosine(37) in tRNA + AMP + H(+)</text>
        <dbReference type="Rhea" id="RHEA:37059"/>
        <dbReference type="Rhea" id="RHEA-COMP:10162"/>
        <dbReference type="Rhea" id="RHEA-COMP:10163"/>
        <dbReference type="ChEBI" id="CHEBI:15378"/>
        <dbReference type="ChEBI" id="CHEBI:73682"/>
        <dbReference type="ChEBI" id="CHEBI:74411"/>
        <dbReference type="ChEBI" id="CHEBI:74418"/>
        <dbReference type="ChEBI" id="CHEBI:456215"/>
        <dbReference type="EC" id="2.3.1.234"/>
    </reaction>
</comment>
<comment type="cofactor">
    <cofactor evidence="1">
        <name>Fe(2+)</name>
        <dbReference type="ChEBI" id="CHEBI:29033"/>
    </cofactor>
    <text evidence="1">Binds 1 Fe(2+) ion per subunit.</text>
</comment>
<comment type="subcellular location">
    <subcellularLocation>
        <location evidence="1">Cytoplasm</location>
    </subcellularLocation>
</comment>
<comment type="similarity">
    <text evidence="1">Belongs to the KAE1 / TsaD family.</text>
</comment>
<protein>
    <recommendedName>
        <fullName evidence="1">tRNA N6-adenosine threonylcarbamoyltransferase</fullName>
        <ecNumber evidence="1">2.3.1.234</ecNumber>
    </recommendedName>
    <alternativeName>
        <fullName evidence="1">N6-L-threonylcarbamoyladenine synthase</fullName>
        <shortName evidence="1">t(6)A synthase</shortName>
    </alternativeName>
    <alternativeName>
        <fullName evidence="1">t(6)A37 threonylcarbamoyladenosine biosynthesis protein TsaD</fullName>
    </alternativeName>
    <alternativeName>
        <fullName evidence="1">tRNA threonylcarbamoyladenosine biosynthesis protein TsaD</fullName>
    </alternativeName>
</protein>
<name>TSAD_SALSV</name>
<sequence>MRVLGIETSCDETGIAIYDDKKGLLANQLYSQVKLHADYGGVVPELASRDHVRKTVPLIQAALKEAGLTASDIDAVAYTAGPGLVGALLVGATVGRSLAFAWTVPAIPVHHMEGHLLAPMLEDNPPDFPFVALLVSGGHTQLISVTGIGQYELLGESIDDAAGEAFDKTAKLLGLDYPGGPMLSKMASQGTAGRFVFPRPMTDRPGLDFSFSGLKTFAANTIRSNGDDEQTRADIARAFEDAVVDTLMIKCKRALESTGFKRLVMAGGVSANRTLRAKLAEMMQKRRGEVFYARPEFCTDNGAMIAYAGMVRFKAGVTADLGVTVRPRWPLAELPAA</sequence>
<dbReference type="EC" id="2.3.1.234" evidence="1"/>
<dbReference type="EMBL" id="CP001127">
    <property type="protein sequence ID" value="ACF89963.1"/>
    <property type="molecule type" value="Genomic_DNA"/>
</dbReference>
<dbReference type="RefSeq" id="WP_001264396.1">
    <property type="nucleotide sequence ID" value="NC_011094.1"/>
</dbReference>
<dbReference type="SMR" id="B4TVU2"/>
<dbReference type="KEGG" id="sew:SeSA_A3398"/>
<dbReference type="HOGENOM" id="CLU_023208_0_0_6"/>
<dbReference type="Proteomes" id="UP000001865">
    <property type="component" value="Chromosome"/>
</dbReference>
<dbReference type="GO" id="GO:0005737">
    <property type="term" value="C:cytoplasm"/>
    <property type="evidence" value="ECO:0007669"/>
    <property type="project" value="UniProtKB-SubCell"/>
</dbReference>
<dbReference type="GO" id="GO:0005506">
    <property type="term" value="F:iron ion binding"/>
    <property type="evidence" value="ECO:0007669"/>
    <property type="project" value="UniProtKB-UniRule"/>
</dbReference>
<dbReference type="GO" id="GO:0061711">
    <property type="term" value="F:N(6)-L-threonylcarbamoyladenine synthase activity"/>
    <property type="evidence" value="ECO:0007669"/>
    <property type="project" value="UniProtKB-EC"/>
</dbReference>
<dbReference type="GO" id="GO:0002949">
    <property type="term" value="P:tRNA threonylcarbamoyladenosine modification"/>
    <property type="evidence" value="ECO:0007669"/>
    <property type="project" value="UniProtKB-UniRule"/>
</dbReference>
<dbReference type="CDD" id="cd24097">
    <property type="entry name" value="ASKHA_NBD_TsaD-like"/>
    <property type="match status" value="1"/>
</dbReference>
<dbReference type="FunFam" id="3.30.420.40:FF:000031">
    <property type="entry name" value="tRNA N6-adenosine threonylcarbamoyltransferase"/>
    <property type="match status" value="1"/>
</dbReference>
<dbReference type="Gene3D" id="3.30.420.40">
    <property type="match status" value="2"/>
</dbReference>
<dbReference type="HAMAP" id="MF_01445">
    <property type="entry name" value="TsaD"/>
    <property type="match status" value="1"/>
</dbReference>
<dbReference type="InterPro" id="IPR043129">
    <property type="entry name" value="ATPase_NBD"/>
</dbReference>
<dbReference type="InterPro" id="IPR000905">
    <property type="entry name" value="Gcp-like_dom"/>
</dbReference>
<dbReference type="InterPro" id="IPR017861">
    <property type="entry name" value="KAE1/TsaD"/>
</dbReference>
<dbReference type="InterPro" id="IPR022450">
    <property type="entry name" value="TsaD"/>
</dbReference>
<dbReference type="NCBIfam" id="TIGR00329">
    <property type="entry name" value="gcp_kae1"/>
    <property type="match status" value="1"/>
</dbReference>
<dbReference type="NCBIfam" id="TIGR03723">
    <property type="entry name" value="T6A_TsaD_YgjD"/>
    <property type="match status" value="1"/>
</dbReference>
<dbReference type="PANTHER" id="PTHR11735">
    <property type="entry name" value="TRNA N6-ADENOSINE THREONYLCARBAMOYLTRANSFERASE"/>
    <property type="match status" value="1"/>
</dbReference>
<dbReference type="PANTHER" id="PTHR11735:SF6">
    <property type="entry name" value="TRNA N6-ADENOSINE THREONYLCARBAMOYLTRANSFERASE, MITOCHONDRIAL"/>
    <property type="match status" value="1"/>
</dbReference>
<dbReference type="Pfam" id="PF00814">
    <property type="entry name" value="TsaD"/>
    <property type="match status" value="1"/>
</dbReference>
<dbReference type="PRINTS" id="PR00789">
    <property type="entry name" value="OSIALOPTASE"/>
</dbReference>
<dbReference type="SUPFAM" id="SSF53067">
    <property type="entry name" value="Actin-like ATPase domain"/>
    <property type="match status" value="1"/>
</dbReference>